<feature type="chain" id="PRO_0000118950" description="Exocyst complex component SEC10">
    <location>
        <begin position="1"/>
        <end position="871"/>
    </location>
</feature>
<feature type="coiled-coil region" evidence="1">
    <location>
        <begin position="74"/>
        <end position="101"/>
    </location>
</feature>
<feature type="modified residue" description="Phosphoserine" evidence="4">
    <location>
        <position position="142"/>
    </location>
</feature>
<feature type="modified residue" description="Phosphoserine" evidence="4 5 6">
    <location>
        <position position="485"/>
    </location>
</feature>
<feature type="modified residue" description="Phosphoserine" evidence="5">
    <location>
        <position position="507"/>
    </location>
</feature>
<evidence type="ECO:0000255" key="1"/>
<evidence type="ECO:0000269" key="2">
    <source>
    </source>
</evidence>
<evidence type="ECO:0000305" key="3"/>
<evidence type="ECO:0007744" key="4">
    <source>
    </source>
</evidence>
<evidence type="ECO:0007744" key="5">
    <source>
    </source>
</evidence>
<evidence type="ECO:0007744" key="6">
    <source>
    </source>
</evidence>
<dbReference type="EMBL" id="Y08789">
    <property type="protein sequence ID" value="CAA70041.1"/>
    <property type="molecule type" value="Genomic_DNA"/>
</dbReference>
<dbReference type="EMBL" id="U51921">
    <property type="protein sequence ID" value="AAB67490.1"/>
    <property type="molecule type" value="Genomic_DNA"/>
</dbReference>
<dbReference type="EMBL" id="U17246">
    <property type="protein sequence ID" value="AAB67476.2"/>
    <property type="molecule type" value="Genomic_DNA"/>
</dbReference>
<dbReference type="EMBL" id="BK006945">
    <property type="protein sequence ID" value="DAA09488.1"/>
    <property type="molecule type" value="Genomic_DNA"/>
</dbReference>
<dbReference type="PIR" id="S68482">
    <property type="entry name" value="S68482"/>
</dbReference>
<dbReference type="RefSeq" id="NP_013267.1">
    <property type="nucleotide sequence ID" value="NM_001182053.1"/>
</dbReference>
<dbReference type="PDB" id="5YFP">
    <property type="method" value="EM"/>
    <property type="resolution" value="4.40 A"/>
    <property type="chains" value="E=1-871"/>
</dbReference>
<dbReference type="PDB" id="6VKL">
    <property type="method" value="EM"/>
    <property type="resolution" value="4.40 A"/>
    <property type="chains" value="E=1-871"/>
</dbReference>
<dbReference type="PDBsum" id="5YFP"/>
<dbReference type="PDBsum" id="6VKL"/>
<dbReference type="EMDB" id="EMD-21226"/>
<dbReference type="EMDB" id="EMD-6827"/>
<dbReference type="SMR" id="Q06245"/>
<dbReference type="BioGRID" id="31439">
    <property type="interactions" value="211"/>
</dbReference>
<dbReference type="ComplexPortal" id="CPX-1890">
    <property type="entry name" value="Exocyst"/>
</dbReference>
<dbReference type="DIP" id="DIP-1724N"/>
<dbReference type="FunCoup" id="Q06245">
    <property type="interactions" value="913"/>
</dbReference>
<dbReference type="IntAct" id="Q06245">
    <property type="interactions" value="16"/>
</dbReference>
<dbReference type="MINT" id="Q06245"/>
<dbReference type="STRING" id="4932.YLR166C"/>
<dbReference type="TCDB" id="1.F.2.1.1">
    <property type="family name" value="the octameric exocyst (exocyst) family"/>
</dbReference>
<dbReference type="iPTMnet" id="Q06245"/>
<dbReference type="PaxDb" id="4932-YLR166C"/>
<dbReference type="PeptideAtlas" id="Q06245"/>
<dbReference type="EnsemblFungi" id="YLR166C_mRNA">
    <property type="protein sequence ID" value="YLR166C"/>
    <property type="gene ID" value="YLR166C"/>
</dbReference>
<dbReference type="GeneID" id="850863"/>
<dbReference type="KEGG" id="sce:YLR166C"/>
<dbReference type="AGR" id="SGD:S000004156"/>
<dbReference type="SGD" id="S000004156">
    <property type="gene designation" value="SEC10"/>
</dbReference>
<dbReference type="VEuPathDB" id="FungiDB:YLR166C"/>
<dbReference type="eggNOG" id="KOG3745">
    <property type="taxonomic scope" value="Eukaryota"/>
</dbReference>
<dbReference type="GeneTree" id="ENSGT00390000012837"/>
<dbReference type="HOGENOM" id="CLU_008002_1_0_1"/>
<dbReference type="InParanoid" id="Q06245"/>
<dbReference type="OMA" id="PLCKHHY"/>
<dbReference type="OrthoDB" id="125856at2759"/>
<dbReference type="BioCyc" id="YEAST:G3O-32296-MONOMER"/>
<dbReference type="BioGRID-ORCS" id="850863">
    <property type="hits" value="2 hits in 10 CRISPR screens"/>
</dbReference>
<dbReference type="PRO" id="PR:Q06245"/>
<dbReference type="Proteomes" id="UP000002311">
    <property type="component" value="Chromosome XII"/>
</dbReference>
<dbReference type="RNAct" id="Q06245">
    <property type="molecule type" value="protein"/>
</dbReference>
<dbReference type="GO" id="GO:0005935">
    <property type="term" value="C:cellular bud neck"/>
    <property type="evidence" value="ECO:0007005"/>
    <property type="project" value="SGD"/>
</dbReference>
<dbReference type="GO" id="GO:0000145">
    <property type="term" value="C:exocyst"/>
    <property type="evidence" value="ECO:0000314"/>
    <property type="project" value="SGD"/>
</dbReference>
<dbReference type="GO" id="GO:0043332">
    <property type="term" value="C:mating projection tip"/>
    <property type="evidence" value="ECO:0007005"/>
    <property type="project" value="SGD"/>
</dbReference>
<dbReference type="GO" id="GO:0006887">
    <property type="term" value="P:exocytosis"/>
    <property type="evidence" value="ECO:0000315"/>
    <property type="project" value="SGD"/>
</dbReference>
<dbReference type="GO" id="GO:0006893">
    <property type="term" value="P:Golgi to plasma membrane transport"/>
    <property type="evidence" value="ECO:0000315"/>
    <property type="project" value="SGD"/>
</dbReference>
<dbReference type="GO" id="GO:0015031">
    <property type="term" value="P:protein transport"/>
    <property type="evidence" value="ECO:0007669"/>
    <property type="project" value="UniProtKB-KW"/>
</dbReference>
<dbReference type="GO" id="GO:0006904">
    <property type="term" value="P:vesicle docking involved in exocytosis"/>
    <property type="evidence" value="ECO:0000303"/>
    <property type="project" value="ComplexPortal"/>
</dbReference>
<dbReference type="InterPro" id="IPR009976">
    <property type="entry name" value="Sec10-like"/>
</dbReference>
<dbReference type="InterPro" id="IPR048627">
    <property type="entry name" value="Sec10_HB"/>
</dbReference>
<dbReference type="InterPro" id="IPR048625">
    <property type="entry name" value="Sec10_N"/>
</dbReference>
<dbReference type="PANTHER" id="PTHR12100:SF0">
    <property type="entry name" value="EXOCYST COMPLEX COMPONENT 5"/>
    <property type="match status" value="1"/>
</dbReference>
<dbReference type="PANTHER" id="PTHR12100">
    <property type="entry name" value="SEC10"/>
    <property type="match status" value="1"/>
</dbReference>
<dbReference type="Pfam" id="PF07393">
    <property type="entry name" value="Sec10_HB"/>
    <property type="match status" value="1"/>
</dbReference>
<dbReference type="Pfam" id="PF20667">
    <property type="entry name" value="Sec10_N"/>
    <property type="match status" value="1"/>
</dbReference>
<sequence length="871" mass="100342">MNSLYELDPKWKKLLKTDNFLGGLTVNEFVQELSKDHRNDVLIDANTKNLPTNEKDQDAIREAIWKQLDPKPYIRTFESTLKELKNLNEETLNKRQYFSEQVATQEVIHSENVIKLSKDLHTTLLTFDKLDDRLTNVTQVVSPLGDKLETAIKKKQNYIQSVELIRRYNDFYSMGKSDIVEQLRLSKNWKLNLKSVKLMKNLLILSSKLETSSIPKTINTKLVIEKYSEMMENELLENFNSAYRENNFTKLNEIAIILNNFNGGVNVIQSFINQHDYFIDTKQIDLENEFENVFIKNVKFKEQLIDFENHSVIIETSMQNLINDVETVIKNESKIVKRVFEEKATHVIQLFIQRVFAQKIEPRFEVLLRNSLSISNLAYVRILHGLFTLFGKFTKSLIDYFQLLEIDDSNQILSTTLEQCFADLFSHYLYDRSKYFGIEKRSLEAILVDMTSKFTVNYDKEINKRVLLDKYKEKLSTNVDAFMHSPRGNTHSRQDSTSRSKLSQFNSFLKTHLDKDHLSLNRTNTLSDSFNNSSSSTQYDVANNSSSLVNSSFTASDIDNSPNSPANYSLNDVDSMLKCVVESTARVMELIPNKAHLYILEILKIMFLGIVDSYMEIALEVAYWKICKVDINKTAGVVNLNFLKFISMSTEILDLLSISIKSIFLPLLNNSPEIKAQIIEMTNSQIQKMEILINIILQETITVISTKFSAILCKQKKKDFVPKSQELLDQDTLPAIEIVNILNLIFEQSSKFLKGKNLQTFLTLIGEELYGLLLSHYSHFQVNSIGGVVVTKDIIGYQTAIEDWGVASLIDKFATLRELANLFTVQPELLESLTKEGHLADIGRDIIQSYISNREDFNHDNFINSVKLNFR</sequence>
<protein>
    <recommendedName>
        <fullName>Exocyst complex component SEC10</fullName>
    </recommendedName>
</protein>
<gene>
    <name type="primary">SEC10</name>
    <name type="ordered locus">YLR166C</name>
    <name type="ORF">L9362.12</name>
</gene>
<organism>
    <name type="scientific">Saccharomyces cerevisiae (strain ATCC 204508 / S288c)</name>
    <name type="common">Baker's yeast</name>
    <dbReference type="NCBI Taxonomy" id="559292"/>
    <lineage>
        <taxon>Eukaryota</taxon>
        <taxon>Fungi</taxon>
        <taxon>Dikarya</taxon>
        <taxon>Ascomycota</taxon>
        <taxon>Saccharomycotina</taxon>
        <taxon>Saccharomycetes</taxon>
        <taxon>Saccharomycetales</taxon>
        <taxon>Saccharomycetaceae</taxon>
        <taxon>Saccharomyces</taxon>
    </lineage>
</organism>
<accession>Q06245</accession>
<accession>D6VYH2</accession>
<accession>P87329</accession>
<name>SEC10_YEAST</name>
<proteinExistence type="evidence at protein level"/>
<reference key="1">
    <citation type="journal article" date="1996" name="EMBO J.">
        <title>The Exocyst is a multiprotein complex required for exocytosis in Saccharomyces cerevisiae.</title>
        <authorList>
            <person name="TerBush D.R."/>
            <person name="Maurice T."/>
            <person name="Roth D."/>
            <person name="Novick P."/>
        </authorList>
    </citation>
    <scope>NUCLEOTIDE SEQUENCE [GENOMIC DNA]</scope>
    <scope>PROTEIN SEQUENCE OF 347-353 AND 856-867</scope>
</reference>
<reference key="2">
    <citation type="journal article" date="1997" name="Nature">
        <title>The nucleotide sequence of Saccharomyces cerevisiae chromosome XII.</title>
        <authorList>
            <person name="Johnston M."/>
            <person name="Hillier L.W."/>
            <person name="Riles L."/>
            <person name="Albermann K."/>
            <person name="Andre B."/>
            <person name="Ansorge W."/>
            <person name="Benes V."/>
            <person name="Brueckner M."/>
            <person name="Delius H."/>
            <person name="Dubois E."/>
            <person name="Duesterhoeft A."/>
            <person name="Entian K.-D."/>
            <person name="Floeth M."/>
            <person name="Goffeau A."/>
            <person name="Hebling U."/>
            <person name="Heumann K."/>
            <person name="Heuss-Neitzel D."/>
            <person name="Hilbert H."/>
            <person name="Hilger F."/>
            <person name="Kleine K."/>
            <person name="Koetter P."/>
            <person name="Louis E.J."/>
            <person name="Messenguy F."/>
            <person name="Mewes H.-W."/>
            <person name="Miosga T."/>
            <person name="Moestl D."/>
            <person name="Mueller-Auer S."/>
            <person name="Nentwich U."/>
            <person name="Obermaier B."/>
            <person name="Piravandi E."/>
            <person name="Pohl T.M."/>
            <person name="Portetelle D."/>
            <person name="Purnelle B."/>
            <person name="Rechmann S."/>
            <person name="Rieger M."/>
            <person name="Rinke M."/>
            <person name="Rose M."/>
            <person name="Scharfe M."/>
            <person name="Scherens B."/>
            <person name="Scholler P."/>
            <person name="Schwager C."/>
            <person name="Schwarz S."/>
            <person name="Underwood A.P."/>
            <person name="Urrestarazu L.A."/>
            <person name="Vandenbol M."/>
            <person name="Verhasselt P."/>
            <person name="Vierendeels F."/>
            <person name="Voet M."/>
            <person name="Volckaert G."/>
            <person name="Voss H."/>
            <person name="Wambutt R."/>
            <person name="Wedler E."/>
            <person name="Wedler H."/>
            <person name="Zimmermann F.K."/>
            <person name="Zollner A."/>
            <person name="Hani J."/>
            <person name="Hoheisel J.D."/>
        </authorList>
    </citation>
    <scope>NUCLEOTIDE SEQUENCE [LARGE SCALE GENOMIC DNA]</scope>
    <source>
        <strain>ATCC 204508 / S288c</strain>
    </source>
</reference>
<reference key="3">
    <citation type="journal article" date="2014" name="G3 (Bethesda)">
        <title>The reference genome sequence of Saccharomyces cerevisiae: Then and now.</title>
        <authorList>
            <person name="Engel S.R."/>
            <person name="Dietrich F.S."/>
            <person name="Fisk D.G."/>
            <person name="Binkley G."/>
            <person name="Balakrishnan R."/>
            <person name="Costanzo M.C."/>
            <person name="Dwight S.S."/>
            <person name="Hitz B.C."/>
            <person name="Karra K."/>
            <person name="Nash R.S."/>
            <person name="Weng S."/>
            <person name="Wong E.D."/>
            <person name="Lloyd P."/>
            <person name="Skrzypek M.S."/>
            <person name="Miyasato S.R."/>
            <person name="Simison M."/>
            <person name="Cherry J.M."/>
        </authorList>
    </citation>
    <scope>GENOME REANNOTATION</scope>
    <source>
        <strain>ATCC 204508 / S288c</strain>
    </source>
</reference>
<reference key="4">
    <citation type="journal article" date="2003" name="Nature">
        <title>Global analysis of protein expression in yeast.</title>
        <authorList>
            <person name="Ghaemmaghami S."/>
            <person name="Huh W.-K."/>
            <person name="Bower K."/>
            <person name="Howson R.W."/>
            <person name="Belle A."/>
            <person name="Dephoure N."/>
            <person name="O'Shea E.K."/>
            <person name="Weissman J.S."/>
        </authorList>
    </citation>
    <scope>LEVEL OF PROTEIN EXPRESSION [LARGE SCALE ANALYSIS]</scope>
</reference>
<reference key="5">
    <citation type="journal article" date="2007" name="J. Proteome Res.">
        <title>Large-scale phosphorylation analysis of alpha-factor-arrested Saccharomyces cerevisiae.</title>
        <authorList>
            <person name="Li X."/>
            <person name="Gerber S.A."/>
            <person name="Rudner A.D."/>
            <person name="Beausoleil S.A."/>
            <person name="Haas W."/>
            <person name="Villen J."/>
            <person name="Elias J.E."/>
            <person name="Gygi S.P."/>
        </authorList>
    </citation>
    <scope>PHOSPHORYLATION [LARGE SCALE ANALYSIS] AT SER-142 AND SER-485</scope>
    <scope>IDENTIFICATION BY MASS SPECTROMETRY [LARGE SCALE ANALYSIS]</scope>
    <source>
        <strain>ADR376</strain>
    </source>
</reference>
<reference key="6">
    <citation type="journal article" date="2008" name="Mol. Cell. Proteomics">
        <title>A multidimensional chromatography technology for in-depth phosphoproteome analysis.</title>
        <authorList>
            <person name="Albuquerque C.P."/>
            <person name="Smolka M.B."/>
            <person name="Payne S.H."/>
            <person name="Bafna V."/>
            <person name="Eng J."/>
            <person name="Zhou H."/>
        </authorList>
    </citation>
    <scope>PHOSPHORYLATION [LARGE SCALE ANALYSIS] AT SER-485 AND SER-507</scope>
    <scope>IDENTIFICATION BY MASS SPECTROMETRY [LARGE SCALE ANALYSIS]</scope>
</reference>
<reference key="7">
    <citation type="journal article" date="2009" name="Science">
        <title>Global analysis of Cdk1 substrate phosphorylation sites provides insights into evolution.</title>
        <authorList>
            <person name="Holt L.J."/>
            <person name="Tuch B.B."/>
            <person name="Villen J."/>
            <person name="Johnson A.D."/>
            <person name="Gygi S.P."/>
            <person name="Morgan D.O."/>
        </authorList>
    </citation>
    <scope>PHOSPHORYLATION [LARGE SCALE ANALYSIS] AT SER-485</scope>
    <scope>IDENTIFICATION BY MASS SPECTROMETRY [LARGE SCALE ANALYSIS]</scope>
</reference>
<keyword id="KW-0002">3D-structure</keyword>
<keyword id="KW-0175">Coiled coil</keyword>
<keyword id="KW-0903">Direct protein sequencing</keyword>
<keyword id="KW-0268">Exocytosis</keyword>
<keyword id="KW-0597">Phosphoprotein</keyword>
<keyword id="KW-0653">Protein transport</keyword>
<keyword id="KW-1185">Reference proteome</keyword>
<keyword id="KW-0813">Transport</keyword>
<comment type="function">
    <text>Component of the exocyst complex involved in the docking of exocytic vesicles with fusion sites on the plasma membrane.</text>
</comment>
<comment type="subunit">
    <text>The exocyst complex is composed of SEC3, SEC5, SEC6, SEC8, SEC10, SEC15, EXO70 and EXO84.</text>
</comment>
<comment type="interaction">
    <interactant intactId="EBI-16504">
        <id>Q06245</id>
    </interactant>
    <interactant intactId="EBI-6717">
        <id>P19658</id>
        <label>EXO70</label>
    </interactant>
    <organismsDiffer>false</organismsDiffer>
    <experiments>3</experiments>
</comment>
<comment type="interaction">
    <interactant intactId="EBI-16504">
        <id>Q06245</id>
    </interactant>
    <interactant intactId="EBI-21567">
        <id>P38261</id>
        <label>EXO84</label>
    </interactant>
    <organismsDiffer>false</organismsDiffer>
    <experiments>6</experiments>
</comment>
<comment type="interaction">
    <interactant intactId="EBI-16504">
        <id>Q06245</id>
    </interactant>
    <interactant intactId="EBI-16874">
        <id>P32844</id>
        <label>SEC6</label>
    </interactant>
    <organismsDiffer>false</organismsDiffer>
    <experiments>3</experiments>
</comment>
<comment type="interaction">
    <interactant intactId="EBI-16504">
        <id>Q06245</id>
    </interactant>
    <interactant intactId="EBI-16896">
        <id>P32855</id>
        <label>SEC8</label>
    </interactant>
    <organismsDiffer>false</organismsDiffer>
    <experiments>2</experiments>
</comment>
<comment type="miscellaneous">
    <text evidence="2">Present with 2340 molecules/cell in log phase SD medium.</text>
</comment>
<comment type="similarity">
    <text evidence="3">Belongs to the SEC10 family.</text>
</comment>